<name>RR8_TOBAC</name>
<evidence type="ECO:0000250" key="1"/>
<evidence type="ECO:0000305" key="2"/>
<dbReference type="EMBL" id="Z00044">
    <property type="protein sequence ID" value="CAA77378.1"/>
    <property type="molecule type" value="Genomic_DNA"/>
</dbReference>
<dbReference type="PIR" id="A02717">
    <property type="entry name" value="R3NT8"/>
</dbReference>
<dbReference type="RefSeq" id="NP_054534.1">
    <property type="nucleotide sequence ID" value="NC_001879.2"/>
</dbReference>
<dbReference type="SMR" id="P06363"/>
<dbReference type="GeneID" id="800524"/>
<dbReference type="KEGG" id="nta:800524"/>
<dbReference type="OMA" id="NSAYHDT"/>
<dbReference type="OrthoDB" id="409928at2759"/>
<dbReference type="Proteomes" id="UP000084051">
    <property type="component" value="Unplaced"/>
</dbReference>
<dbReference type="GO" id="GO:0009507">
    <property type="term" value="C:chloroplast"/>
    <property type="evidence" value="ECO:0007669"/>
    <property type="project" value="UniProtKB-SubCell"/>
</dbReference>
<dbReference type="GO" id="GO:1990904">
    <property type="term" value="C:ribonucleoprotein complex"/>
    <property type="evidence" value="ECO:0007669"/>
    <property type="project" value="UniProtKB-KW"/>
</dbReference>
<dbReference type="GO" id="GO:0005840">
    <property type="term" value="C:ribosome"/>
    <property type="evidence" value="ECO:0007669"/>
    <property type="project" value="UniProtKB-KW"/>
</dbReference>
<dbReference type="GO" id="GO:0019843">
    <property type="term" value="F:rRNA binding"/>
    <property type="evidence" value="ECO:0007669"/>
    <property type="project" value="UniProtKB-UniRule"/>
</dbReference>
<dbReference type="GO" id="GO:0003735">
    <property type="term" value="F:structural constituent of ribosome"/>
    <property type="evidence" value="ECO:0007669"/>
    <property type="project" value="InterPro"/>
</dbReference>
<dbReference type="GO" id="GO:0006412">
    <property type="term" value="P:translation"/>
    <property type="evidence" value="ECO:0007669"/>
    <property type="project" value="UniProtKB-UniRule"/>
</dbReference>
<dbReference type="FunFam" id="3.30.1490.10:FF:000001">
    <property type="entry name" value="30S ribosomal protein S8"/>
    <property type="match status" value="1"/>
</dbReference>
<dbReference type="FunFam" id="3.30.1370.30:FF:000004">
    <property type="entry name" value="30S ribosomal protein S8, chloroplastic"/>
    <property type="match status" value="1"/>
</dbReference>
<dbReference type="Gene3D" id="3.30.1370.30">
    <property type="match status" value="1"/>
</dbReference>
<dbReference type="Gene3D" id="3.30.1490.10">
    <property type="match status" value="1"/>
</dbReference>
<dbReference type="HAMAP" id="MF_01302_B">
    <property type="entry name" value="Ribosomal_uS8_B"/>
    <property type="match status" value="1"/>
</dbReference>
<dbReference type="InterPro" id="IPR000630">
    <property type="entry name" value="Ribosomal_uS8"/>
</dbReference>
<dbReference type="InterPro" id="IPR047863">
    <property type="entry name" value="Ribosomal_uS8_CS"/>
</dbReference>
<dbReference type="InterPro" id="IPR035987">
    <property type="entry name" value="Ribosomal_uS8_sf"/>
</dbReference>
<dbReference type="NCBIfam" id="NF001109">
    <property type="entry name" value="PRK00136.1"/>
    <property type="match status" value="1"/>
</dbReference>
<dbReference type="PANTHER" id="PTHR11758">
    <property type="entry name" value="40S RIBOSOMAL PROTEIN S15A"/>
    <property type="match status" value="1"/>
</dbReference>
<dbReference type="Pfam" id="PF00410">
    <property type="entry name" value="Ribosomal_S8"/>
    <property type="match status" value="1"/>
</dbReference>
<dbReference type="SUPFAM" id="SSF56047">
    <property type="entry name" value="Ribosomal protein S8"/>
    <property type="match status" value="1"/>
</dbReference>
<dbReference type="PROSITE" id="PS00053">
    <property type="entry name" value="RIBOSOMAL_S8"/>
    <property type="match status" value="1"/>
</dbReference>
<organism>
    <name type="scientific">Nicotiana tabacum</name>
    <name type="common">Common tobacco</name>
    <dbReference type="NCBI Taxonomy" id="4097"/>
    <lineage>
        <taxon>Eukaryota</taxon>
        <taxon>Viridiplantae</taxon>
        <taxon>Streptophyta</taxon>
        <taxon>Embryophyta</taxon>
        <taxon>Tracheophyta</taxon>
        <taxon>Spermatophyta</taxon>
        <taxon>Magnoliopsida</taxon>
        <taxon>eudicotyledons</taxon>
        <taxon>Gunneridae</taxon>
        <taxon>Pentapetalae</taxon>
        <taxon>asterids</taxon>
        <taxon>lamiids</taxon>
        <taxon>Solanales</taxon>
        <taxon>Solanaceae</taxon>
        <taxon>Nicotianoideae</taxon>
        <taxon>Nicotianeae</taxon>
        <taxon>Nicotiana</taxon>
    </lineage>
</organism>
<proteinExistence type="inferred from homology"/>
<reference key="1">
    <citation type="journal article" date="1986" name="EMBO J.">
        <title>The complete nucleotide sequence of the tobacco chloroplast genome: its gene organization and expression.</title>
        <authorList>
            <person name="Shinozaki K."/>
            <person name="Ohme M."/>
            <person name="Tanaka M."/>
            <person name="Wakasugi T."/>
            <person name="Hayashida N."/>
            <person name="Matsubayashi T."/>
            <person name="Zaita N."/>
            <person name="Chunwongse J."/>
            <person name="Obokata J."/>
            <person name="Yamaguchi-Shinozaki K."/>
            <person name="Ohto C."/>
            <person name="Torazawa K."/>
            <person name="Meng B.-Y."/>
            <person name="Sugita M."/>
            <person name="Deno H."/>
            <person name="Kamogashira T."/>
            <person name="Yamada K."/>
            <person name="Kusuda J."/>
            <person name="Takaiwa F."/>
            <person name="Kato A."/>
            <person name="Tohdoh N."/>
            <person name="Shimada H."/>
            <person name="Sugiura M."/>
        </authorList>
    </citation>
    <scope>NUCLEOTIDE SEQUENCE [LARGE SCALE GENOMIC DNA]</scope>
    <source>
        <strain>cv. Bright Yellow 4</strain>
    </source>
</reference>
<reference key="2">
    <citation type="journal article" date="1986" name="Proc. Natl. Acad. Sci. U.S.A.">
        <title>Genes for the eight ribosomal proteins are clustered on the chloroplast genome of tobacco (Nicotiana tabacum): similarity to the S10 and spc operons of Escherichia coli.</title>
        <authorList>
            <person name="Tanaka M."/>
            <person name="Wakasugi T."/>
            <person name="Sugita M."/>
            <person name="Shinozaki K."/>
            <person name="Sugiura M."/>
        </authorList>
    </citation>
    <scope>NUCLEOTIDE SEQUENCE [GENOMIC DNA]</scope>
</reference>
<geneLocation type="chloroplast"/>
<protein>
    <recommendedName>
        <fullName evidence="2">Small ribosomal subunit protein uS8c</fullName>
    </recommendedName>
    <alternativeName>
        <fullName>30S ribosomal protein S8, chloroplastic</fullName>
    </alternativeName>
</protein>
<accession>P06363</accession>
<keyword id="KW-0150">Chloroplast</keyword>
<keyword id="KW-0934">Plastid</keyword>
<keyword id="KW-1185">Reference proteome</keyword>
<keyword id="KW-0687">Ribonucleoprotein</keyword>
<keyword id="KW-0689">Ribosomal protein</keyword>
<keyword id="KW-0694">RNA-binding</keyword>
<keyword id="KW-0699">rRNA-binding</keyword>
<feature type="chain" id="PRO_0000126597" description="Small ribosomal subunit protein uS8c">
    <location>
        <begin position="1"/>
        <end position="134"/>
    </location>
</feature>
<sequence length="134" mass="15791">MGRDTIAEIITSIRNADMDRKRVVRIASTNITENIVQILLREGFIENVRKHREKNKYFLVLTLRHRRNRKRPYRNILNLKRISRPGLRIYSNYQRIPRILGGMGIVILSTSRGIMTDREARLEGIGGEILCYIW</sequence>
<gene>
    <name type="primary">rps8</name>
</gene>
<comment type="function">
    <text evidence="1">One of the primary rRNA binding proteins, it binds directly to 16S rRNA central domain where it helps coordinate assembly of the platform of the 30S subunit.</text>
</comment>
<comment type="subunit">
    <text evidence="1">Part of the 30S ribosomal subunit.</text>
</comment>
<comment type="subcellular location">
    <subcellularLocation>
        <location>Plastid</location>
        <location>Chloroplast</location>
    </subcellularLocation>
</comment>
<comment type="similarity">
    <text evidence="2">Belongs to the universal ribosomal protein uS8 family.</text>
</comment>